<dbReference type="EC" id="4.1.1.7"/>
<dbReference type="EMBL" id="AE004091">
    <property type="protein sequence ID" value="AAG08286.1"/>
    <property type="molecule type" value="Genomic_DNA"/>
</dbReference>
<dbReference type="PIR" id="C83033">
    <property type="entry name" value="C83033"/>
</dbReference>
<dbReference type="RefSeq" id="NP_253588.1">
    <property type="nucleotide sequence ID" value="NC_002516.2"/>
</dbReference>
<dbReference type="RefSeq" id="WP_003099962.1">
    <property type="nucleotide sequence ID" value="NZ_QZGE01000002.1"/>
</dbReference>
<dbReference type="SMR" id="Q9HUR2"/>
<dbReference type="STRING" id="208964.PA4901"/>
<dbReference type="PaxDb" id="208964-PA4901"/>
<dbReference type="GeneID" id="882177"/>
<dbReference type="KEGG" id="pae:PA4901"/>
<dbReference type="PATRIC" id="fig|208964.12.peg.5134"/>
<dbReference type="PseudoCAP" id="PA4901"/>
<dbReference type="HOGENOM" id="CLU_013748_3_1_6"/>
<dbReference type="InParanoid" id="Q9HUR2"/>
<dbReference type="OrthoDB" id="9773408at2"/>
<dbReference type="PhylomeDB" id="Q9HUR2"/>
<dbReference type="BioCyc" id="PAER208964:G1FZ6-5015-MONOMER"/>
<dbReference type="UniPathway" id="UPA00873">
    <property type="reaction ID" value="UER00854"/>
</dbReference>
<dbReference type="Proteomes" id="UP000002438">
    <property type="component" value="Chromosome"/>
</dbReference>
<dbReference type="GO" id="GO:0003984">
    <property type="term" value="F:acetolactate synthase activity"/>
    <property type="evidence" value="ECO:0000318"/>
    <property type="project" value="GO_Central"/>
</dbReference>
<dbReference type="GO" id="GO:0050695">
    <property type="term" value="F:benzoylformate decarboxylase activity"/>
    <property type="evidence" value="ECO:0007669"/>
    <property type="project" value="UniProtKB-EC"/>
</dbReference>
<dbReference type="GO" id="GO:0050660">
    <property type="term" value="F:flavin adenine dinucleotide binding"/>
    <property type="evidence" value="ECO:0000318"/>
    <property type="project" value="GO_Central"/>
</dbReference>
<dbReference type="GO" id="GO:0000287">
    <property type="term" value="F:magnesium ion binding"/>
    <property type="evidence" value="ECO:0007669"/>
    <property type="project" value="InterPro"/>
</dbReference>
<dbReference type="GO" id="GO:0030976">
    <property type="term" value="F:thiamine pyrophosphate binding"/>
    <property type="evidence" value="ECO:0007669"/>
    <property type="project" value="InterPro"/>
</dbReference>
<dbReference type="GO" id="GO:0019596">
    <property type="term" value="P:mandelate catabolic process"/>
    <property type="evidence" value="ECO:0007669"/>
    <property type="project" value="UniProtKB-UniPathway"/>
</dbReference>
<dbReference type="CDD" id="cd02002">
    <property type="entry name" value="TPP_BFDC"/>
    <property type="match status" value="1"/>
</dbReference>
<dbReference type="CDD" id="cd07035">
    <property type="entry name" value="TPP_PYR_POX_like"/>
    <property type="match status" value="1"/>
</dbReference>
<dbReference type="Gene3D" id="3.40.50.970">
    <property type="match status" value="2"/>
</dbReference>
<dbReference type="Gene3D" id="3.40.50.1220">
    <property type="entry name" value="TPP-binding domain"/>
    <property type="match status" value="1"/>
</dbReference>
<dbReference type="InterPro" id="IPR029035">
    <property type="entry name" value="DHS-like_NAD/FAD-binding_dom"/>
</dbReference>
<dbReference type="InterPro" id="IPR029061">
    <property type="entry name" value="THDP-binding"/>
</dbReference>
<dbReference type="InterPro" id="IPR012000">
    <property type="entry name" value="Thiamin_PyroP_enz_cen_dom"/>
</dbReference>
<dbReference type="InterPro" id="IPR012001">
    <property type="entry name" value="Thiamin_PyroP_enz_TPP-bd_dom"/>
</dbReference>
<dbReference type="InterPro" id="IPR000399">
    <property type="entry name" value="TPP-bd_CS"/>
</dbReference>
<dbReference type="InterPro" id="IPR045229">
    <property type="entry name" value="TPP_enz"/>
</dbReference>
<dbReference type="InterPro" id="IPR011766">
    <property type="entry name" value="TPP_enzyme_TPP-bd"/>
</dbReference>
<dbReference type="NCBIfam" id="NF005485">
    <property type="entry name" value="PRK07092.1"/>
    <property type="match status" value="1"/>
</dbReference>
<dbReference type="PANTHER" id="PTHR18968:SF133">
    <property type="entry name" value="BENZOYLFORMATE DECARBOXYLASE"/>
    <property type="match status" value="1"/>
</dbReference>
<dbReference type="PANTHER" id="PTHR18968">
    <property type="entry name" value="THIAMINE PYROPHOSPHATE ENZYMES"/>
    <property type="match status" value="1"/>
</dbReference>
<dbReference type="Pfam" id="PF02775">
    <property type="entry name" value="TPP_enzyme_C"/>
    <property type="match status" value="1"/>
</dbReference>
<dbReference type="Pfam" id="PF00205">
    <property type="entry name" value="TPP_enzyme_M"/>
    <property type="match status" value="1"/>
</dbReference>
<dbReference type="Pfam" id="PF02776">
    <property type="entry name" value="TPP_enzyme_N"/>
    <property type="match status" value="1"/>
</dbReference>
<dbReference type="SUPFAM" id="SSF52467">
    <property type="entry name" value="DHS-like NAD/FAD-binding domain"/>
    <property type="match status" value="1"/>
</dbReference>
<dbReference type="SUPFAM" id="SSF52518">
    <property type="entry name" value="Thiamin diphosphate-binding fold (THDP-binding)"/>
    <property type="match status" value="2"/>
</dbReference>
<dbReference type="PROSITE" id="PS00187">
    <property type="entry name" value="TPP_ENZYMES"/>
    <property type="match status" value="1"/>
</dbReference>
<gene>
    <name type="primary">mdlC</name>
    <name type="ordered locus">PA4901</name>
</gene>
<evidence type="ECO:0000250" key="1"/>
<evidence type="ECO:0000305" key="2"/>
<feature type="chain" id="PRO_0000287823" description="Benzoylformate decarboxylase">
    <location>
        <begin position="1"/>
        <end position="528"/>
    </location>
</feature>
<feature type="region of interest" description="Thiamine pyrophosphate binding" evidence="1">
    <location>
        <begin position="377"/>
        <end position="460"/>
    </location>
</feature>
<feature type="binding site" evidence="1">
    <location>
        <position position="117"/>
    </location>
    <ligand>
        <name>Mg(2+)</name>
        <dbReference type="ChEBI" id="CHEBI:18420"/>
    </ligand>
</feature>
<feature type="binding site" evidence="1">
    <location>
        <position position="118"/>
    </location>
    <ligand>
        <name>Mg(2+)</name>
        <dbReference type="ChEBI" id="CHEBI:18420"/>
    </ligand>
</feature>
<feature type="binding site" evidence="1">
    <location>
        <position position="428"/>
    </location>
    <ligand>
        <name>Ca(2+)</name>
        <dbReference type="ChEBI" id="CHEBI:29108"/>
    </ligand>
</feature>
<feature type="binding site" evidence="1">
    <location>
        <position position="455"/>
    </location>
    <ligand>
        <name>Ca(2+)</name>
        <dbReference type="ChEBI" id="CHEBI:29108"/>
    </ligand>
</feature>
<feature type="binding site" evidence="1">
    <location>
        <position position="457"/>
    </location>
    <ligand>
        <name>Ca(2+)</name>
        <dbReference type="ChEBI" id="CHEBI:29108"/>
    </ligand>
</feature>
<reference key="1">
    <citation type="journal article" date="2000" name="Nature">
        <title>Complete genome sequence of Pseudomonas aeruginosa PAO1, an opportunistic pathogen.</title>
        <authorList>
            <person name="Stover C.K."/>
            <person name="Pham X.-Q.T."/>
            <person name="Erwin A.L."/>
            <person name="Mizoguchi S.D."/>
            <person name="Warrener P."/>
            <person name="Hickey M.J."/>
            <person name="Brinkman F.S.L."/>
            <person name="Hufnagle W.O."/>
            <person name="Kowalik D.J."/>
            <person name="Lagrou M."/>
            <person name="Garber R.L."/>
            <person name="Goltry L."/>
            <person name="Tolentino E."/>
            <person name="Westbrock-Wadman S."/>
            <person name="Yuan Y."/>
            <person name="Brody L.L."/>
            <person name="Coulter S.N."/>
            <person name="Folger K.R."/>
            <person name="Kas A."/>
            <person name="Larbig K."/>
            <person name="Lim R.M."/>
            <person name="Smith K.A."/>
            <person name="Spencer D.H."/>
            <person name="Wong G.K.-S."/>
            <person name="Wu Z."/>
            <person name="Paulsen I.T."/>
            <person name="Reizer J."/>
            <person name="Saier M.H. Jr."/>
            <person name="Hancock R.E.W."/>
            <person name="Lory S."/>
            <person name="Olson M.V."/>
        </authorList>
    </citation>
    <scope>NUCLEOTIDE SEQUENCE [LARGE SCALE GENOMIC DNA]</scope>
    <source>
        <strain>ATCC 15692 / DSM 22644 / CIP 104116 / JCM 14847 / LMG 12228 / 1C / PRS 101 / PAO1</strain>
    </source>
</reference>
<accession>Q9HUR2</accession>
<organism>
    <name type="scientific">Pseudomonas aeruginosa (strain ATCC 15692 / DSM 22644 / CIP 104116 / JCM 14847 / LMG 12228 / 1C / PRS 101 / PAO1)</name>
    <dbReference type="NCBI Taxonomy" id="208964"/>
    <lineage>
        <taxon>Bacteria</taxon>
        <taxon>Pseudomonadati</taxon>
        <taxon>Pseudomonadota</taxon>
        <taxon>Gammaproteobacteria</taxon>
        <taxon>Pseudomonadales</taxon>
        <taxon>Pseudomonadaceae</taxon>
        <taxon>Pseudomonas</taxon>
    </lineage>
</organism>
<protein>
    <recommendedName>
        <fullName>Benzoylformate decarboxylase</fullName>
        <shortName>BFD</shortName>
        <shortName>BFDC</shortName>
        <ecNumber>4.1.1.7</ecNumber>
    </recommendedName>
</protein>
<name>MDLC_PSEAE</name>
<keyword id="KW-0058">Aromatic hydrocarbons catabolism</keyword>
<keyword id="KW-0106">Calcium</keyword>
<keyword id="KW-0210">Decarboxylase</keyword>
<keyword id="KW-0456">Lyase</keyword>
<keyword id="KW-0460">Magnesium</keyword>
<keyword id="KW-0463">Mandelate pathway</keyword>
<keyword id="KW-0479">Metal-binding</keyword>
<keyword id="KW-1185">Reference proteome</keyword>
<keyword id="KW-0786">Thiamine pyrophosphate</keyword>
<proteinExistence type="inferred from homology"/>
<comment type="catalytic activity">
    <reaction>
        <text>phenylglyoxylate + H(+) = benzaldehyde + CO2</text>
        <dbReference type="Rhea" id="RHEA:23368"/>
        <dbReference type="ChEBI" id="CHEBI:15378"/>
        <dbReference type="ChEBI" id="CHEBI:16526"/>
        <dbReference type="ChEBI" id="CHEBI:17169"/>
        <dbReference type="ChEBI" id="CHEBI:36656"/>
        <dbReference type="EC" id="4.1.1.7"/>
    </reaction>
</comment>
<comment type="cofactor">
    <cofactor evidence="1">
        <name>Ca(2+)</name>
        <dbReference type="ChEBI" id="CHEBI:29108"/>
    </cofactor>
    <text evidence="1">Binds 1 Ca(2+) ion per subunit.</text>
</comment>
<comment type="cofactor">
    <cofactor evidence="1">
        <name>thiamine diphosphate</name>
        <dbReference type="ChEBI" id="CHEBI:58937"/>
    </cofactor>
    <text evidence="1">Binds 1 thiamine pyrophosphate per subunit.</text>
</comment>
<comment type="cofactor">
    <cofactor evidence="1">
        <name>Mg(2+)</name>
        <dbReference type="ChEBI" id="CHEBI:18420"/>
    </cofactor>
    <text evidence="1">Binds 1 Mg(2+) ion per dimer.</text>
</comment>
<comment type="pathway">
    <text>Aromatic compound metabolism; (R)-mandelate degradation; benzoate from (R)-mandelate: step 3/4.</text>
</comment>
<comment type="subunit">
    <text evidence="1">Homotetramer.</text>
</comment>
<comment type="similarity">
    <text evidence="2">Belongs to the TPP enzyme family.</text>
</comment>
<sequence>MKTVHSASYEILRRHGLTTVFGNPGSNELPFLKDFPEDFRYILGLHEGAVVGMADGFALASGRPAFVNLHAAAGTGNGMGALTNAWYSHSPLVITAGQQVRSMIGVEAMLANVDAGQLPKPLVKWSHEPACAQDVPRALSQAIQTASLPPRAPVYLSIPYDDWAQPAPAGVEHLAARQVSGAALPAPALLAELGERLSRSRNPVLVLGPDVDGANANGLAVELAEKLRMPAWVAPSASRCPFPTRHACFRGVLPAAIAGISRLLDGHDLILVVGAPVFRYHQFAPGDYLPAGAELVQVTCDPGEAARAPMGDALVGDIALTLEALLEQVRPSARPLPEALPRPPALAEEGGPLRPETVFDVIDALAPRDAIFVKESTSTVTAFWQRVEMREPGSYFFPAAGGLGFGLPAAVGAQLAQPRRQVIGIIGDGSANYGITALWSAAQYRVPAVFIILKNGTYGALRWFAGVLEVPDAPGLDVPGLDFCAIARGYGVEALHAATREELEGALKHALAADRPVLIEVPTQTIEP</sequence>